<organism>
    <name type="scientific">Staphylococcus aureus (strain MW2)</name>
    <dbReference type="NCBI Taxonomy" id="196620"/>
    <lineage>
        <taxon>Bacteria</taxon>
        <taxon>Bacillati</taxon>
        <taxon>Bacillota</taxon>
        <taxon>Bacilli</taxon>
        <taxon>Bacillales</taxon>
        <taxon>Staphylococcaceae</taxon>
        <taxon>Staphylococcus</taxon>
    </lineage>
</organism>
<feature type="chain" id="PRO_0000162210" description="Pyruvate dehydrogenase E1 component subunit alpha">
    <location>
        <begin position="1"/>
        <end position="370"/>
    </location>
</feature>
<proteinExistence type="inferred from homology"/>
<protein>
    <recommendedName>
        <fullName>Pyruvate dehydrogenase E1 component subunit alpha</fullName>
        <ecNumber>1.2.4.1</ecNumber>
    </recommendedName>
</protein>
<comment type="function">
    <text evidence="1">The pyruvate dehydrogenase complex catalyzes the overall conversion of pyruvate to acetyl-CoA and CO(2). It contains multiple copies of three enzymatic components: pyruvate dehydrogenase (E1), dihydrolipoamide acetyltransferase (E2) and lipoamide dehydrogenase (E3) (By similarity).</text>
</comment>
<comment type="catalytic activity">
    <reaction>
        <text>N(6)-[(R)-lipoyl]-L-lysyl-[protein] + pyruvate + H(+) = N(6)-[(R)-S(8)-acetyldihydrolipoyl]-L-lysyl-[protein] + CO2</text>
        <dbReference type="Rhea" id="RHEA:19189"/>
        <dbReference type="Rhea" id="RHEA-COMP:10474"/>
        <dbReference type="Rhea" id="RHEA-COMP:10478"/>
        <dbReference type="ChEBI" id="CHEBI:15361"/>
        <dbReference type="ChEBI" id="CHEBI:15378"/>
        <dbReference type="ChEBI" id="CHEBI:16526"/>
        <dbReference type="ChEBI" id="CHEBI:83099"/>
        <dbReference type="ChEBI" id="CHEBI:83111"/>
        <dbReference type="EC" id="1.2.4.1"/>
    </reaction>
</comment>
<comment type="cofactor">
    <cofactor evidence="1">
        <name>thiamine diphosphate</name>
        <dbReference type="ChEBI" id="CHEBI:58937"/>
    </cofactor>
</comment>
<comment type="subunit">
    <text>Heterodimer of an alpha and a beta chain.</text>
</comment>
<evidence type="ECO:0000250" key="1"/>
<accession>P60090</accession>
<accession>Q931U0</accession>
<reference key="1">
    <citation type="journal article" date="2002" name="Lancet">
        <title>Genome and virulence determinants of high virulence community-acquired MRSA.</title>
        <authorList>
            <person name="Baba T."/>
            <person name="Takeuchi F."/>
            <person name="Kuroda M."/>
            <person name="Yuzawa H."/>
            <person name="Aoki K."/>
            <person name="Oguchi A."/>
            <person name="Nagai Y."/>
            <person name="Iwama N."/>
            <person name="Asano K."/>
            <person name="Naimi T."/>
            <person name="Kuroda H."/>
            <person name="Cui L."/>
            <person name="Yamamoto K."/>
            <person name="Hiramatsu K."/>
        </authorList>
    </citation>
    <scope>NUCLEOTIDE SEQUENCE [LARGE SCALE GENOMIC DNA]</scope>
    <source>
        <strain>MW2</strain>
    </source>
</reference>
<gene>
    <name type="primary">pdhA</name>
    <name type="ordered locus">MW0976</name>
</gene>
<name>ODPA_STAAW</name>
<keyword id="KW-0560">Oxidoreductase</keyword>
<keyword id="KW-0670">Pyruvate</keyword>
<keyword id="KW-0786">Thiamine pyrophosphate</keyword>
<sequence length="370" mass="41383">MAPKLQAQFDAVKVLNDTQSKFEMVQILDENGNVVNEDLVPDLTDEQLVELMERMVWTRILDQRSISLNRQGRLGFYAPTAGQEASQLASQYALEKEDYILPGYRDVPQIIWHGLPLTEAFLFSRGHFKGNQFPEGVNALSPQIIIGAQYIQAAGVAFALKKRGKNAVAITYTGDGGSSQGDFYEGINFAAAYKAPAIFVIQNNNYAISTPRSKQTAAETLAQKAIAVGIPGIQVDGMDALAVYQATKEARDRAVAGEGPTLIETMTYRYGPHTMAGDDPTRYRTSDEDAEWEKKDPLVRFRKFLENKGLWNEDKENEVIERAKADIKAAIKEADNTEKQTVTSLMEIMYEDMPQNLAEQYEIYKEKESK</sequence>
<dbReference type="EC" id="1.2.4.1"/>
<dbReference type="EMBL" id="BA000033">
    <property type="protein sequence ID" value="BAB94841.1"/>
    <property type="molecule type" value="Genomic_DNA"/>
</dbReference>
<dbReference type="RefSeq" id="WP_000035320.1">
    <property type="nucleotide sequence ID" value="NC_003923.1"/>
</dbReference>
<dbReference type="SMR" id="P60090"/>
<dbReference type="KEGG" id="sam:MW0976"/>
<dbReference type="HOGENOM" id="CLU_029393_1_0_9"/>
<dbReference type="GO" id="GO:0004739">
    <property type="term" value="F:pyruvate dehydrogenase (acetyl-transferring) activity"/>
    <property type="evidence" value="ECO:0007669"/>
    <property type="project" value="UniProtKB-EC"/>
</dbReference>
<dbReference type="GO" id="GO:0009083">
    <property type="term" value="P:branched-chain amino acid catabolic process"/>
    <property type="evidence" value="ECO:0007669"/>
    <property type="project" value="TreeGrafter"/>
</dbReference>
<dbReference type="CDD" id="cd02000">
    <property type="entry name" value="TPP_E1_PDC_ADC_BCADC"/>
    <property type="match status" value="1"/>
</dbReference>
<dbReference type="FunFam" id="3.40.50.970:FF:000023">
    <property type="entry name" value="Pyruvate dehydrogenase E1 component subunit alpha"/>
    <property type="match status" value="1"/>
</dbReference>
<dbReference type="Gene3D" id="3.40.50.970">
    <property type="match status" value="1"/>
</dbReference>
<dbReference type="InterPro" id="IPR050771">
    <property type="entry name" value="Alpha-ketoacid_DH_E1_comp"/>
</dbReference>
<dbReference type="InterPro" id="IPR001017">
    <property type="entry name" value="DH_E1"/>
</dbReference>
<dbReference type="InterPro" id="IPR017596">
    <property type="entry name" value="PdhA/BkdA"/>
</dbReference>
<dbReference type="InterPro" id="IPR029061">
    <property type="entry name" value="THDP-binding"/>
</dbReference>
<dbReference type="NCBIfam" id="TIGR03181">
    <property type="entry name" value="PDH_E1_alph_x"/>
    <property type="match status" value="1"/>
</dbReference>
<dbReference type="PANTHER" id="PTHR43380">
    <property type="entry name" value="2-OXOISOVALERATE DEHYDROGENASE SUBUNIT ALPHA, MITOCHONDRIAL"/>
    <property type="match status" value="1"/>
</dbReference>
<dbReference type="PANTHER" id="PTHR43380:SF1">
    <property type="entry name" value="2-OXOISOVALERATE DEHYDROGENASE SUBUNIT ALPHA, MITOCHONDRIAL"/>
    <property type="match status" value="1"/>
</dbReference>
<dbReference type="Pfam" id="PF00676">
    <property type="entry name" value="E1_dh"/>
    <property type="match status" value="1"/>
</dbReference>
<dbReference type="SUPFAM" id="SSF52518">
    <property type="entry name" value="Thiamin diphosphate-binding fold (THDP-binding)"/>
    <property type="match status" value="1"/>
</dbReference>